<accession>P20637</accession>
<organism>
    <name type="scientific">Vaccinia virus (strain Copenhagen)</name>
    <name type="common">VACV</name>
    <dbReference type="NCBI Taxonomy" id="10249"/>
    <lineage>
        <taxon>Viruses</taxon>
        <taxon>Varidnaviria</taxon>
        <taxon>Bamfordvirae</taxon>
        <taxon>Nucleocytoviricota</taxon>
        <taxon>Pokkesviricetes</taxon>
        <taxon>Chitovirales</taxon>
        <taxon>Poxviridae</taxon>
        <taxon>Chordopoxvirinae</taxon>
        <taxon>Orthopoxvirus</taxon>
        <taxon>Vaccinia virus</taxon>
    </lineage>
</organism>
<reference key="1">
    <citation type="journal article" date="1990" name="Virology">
        <title>The complete DNA sequence of vaccinia virus.</title>
        <authorList>
            <person name="Goebel S.J."/>
            <person name="Johnson G.P."/>
            <person name="Perkus M.E."/>
            <person name="Davis S.W."/>
            <person name="Winslow J.P."/>
            <person name="Paoletti E."/>
        </authorList>
    </citation>
    <scope>NUCLEOTIDE SEQUENCE [LARGE SCALE GENOMIC DNA]</scope>
</reference>
<reference key="2">
    <citation type="journal article" date="1990" name="Virology">
        <title>Appendix to 'The complete DNA sequence of vaccinia virus'.</title>
        <authorList>
            <person name="Goebel S.J."/>
            <person name="Johnson G.P."/>
            <person name="Perkus M.E."/>
            <person name="Davis S.W."/>
            <person name="Winslow J.P."/>
            <person name="Paoletti E."/>
        </authorList>
    </citation>
    <scope>NUCLEOTIDE SEQUENCE [LARGE SCALE GENOMIC DNA]</scope>
</reference>
<sequence length="631" mass="72366">MSKSHAAYIDYALRRTTNMPVEMMGSDVVRLKDYQHFVARVFLGLDSMHSLLLFHETGVGKTMTTVYILKHLKDIYTNWAIILLVKKALIEDPWMNTILRYAPEITKDCIFINYDDQNFRNKFFTNIKTINSKSRICVIIDECHNFISKSLIKEDGKIRPTRSVYNFLSKTIALKNHKMICLSATPIVNSVQEFTMLVNLLRPGSLQHQSLFENKRLVDEKELVSKLGGLCSYIVNNEFSIFDDVEGSASFAKKTVLMRYVNMSKKQEEIYQKAKLAEIKTGISSFRILRRMATTFTFDSFPERQNRDPGEYAQEIATLYNDFKNSLRNREFSKSALDTFKKGELLKGDASAADISLFTELKEKSVKFIDVCLGILASHGKCLVFEPFVNQSGIEILLLYFKVFGISNIEFSSRTKDTRIKAVAEFNQESNTNGECIKTCVFSSSGGEGISFFSINDIFILDMTWNEASLRQIVGRAIRLNSHVLTPPERRYVNVHFIMARLSNGMPTVDEDLFEIIQSKSKEFVQLFRVFKHTSLEWIHANEKDFSPIDNESGWKTLVSRAIDLSSKKNITNKLIEGTNIWYSNSNRLMSINRGFKGVDGRVYDVDGNYLHDMPDNPVIKIHDGKLIYIF</sequence>
<protein>
    <recommendedName>
        <fullName>Nucleoside triphosphatase I</fullName>
        <ecNumber>3.6.1.15</ecNumber>
    </recommendedName>
    <alternativeName>
        <fullName>Factor X</fullName>
    </alternativeName>
    <alternativeName>
        <fullName>NPH-I</fullName>
    </alternativeName>
    <alternativeName>
        <fullName>Nucleoside triphosphate phosphohydrolase I</fullName>
        <shortName>NPH I</shortName>
    </alternativeName>
</protein>
<evidence type="ECO:0000250" key="1"/>
<evidence type="ECO:0000250" key="2">
    <source>
        <dbReference type="UniProtKB" id="P05807"/>
    </source>
</evidence>
<evidence type="ECO:0000255" key="3">
    <source>
        <dbReference type="PROSITE-ProRule" id="PRU00541"/>
    </source>
</evidence>
<evidence type="ECO:0000255" key="4">
    <source>
        <dbReference type="PROSITE-ProRule" id="PRU00542"/>
    </source>
</evidence>
<evidence type="ECO:0000305" key="5"/>
<feature type="chain" id="PRO_0000099091" description="Nucleoside triphosphatase I">
    <location>
        <begin position="1"/>
        <end position="631"/>
    </location>
</feature>
<feature type="domain" description="Helicase ATP-binding" evidence="3">
    <location>
        <begin position="42"/>
        <end position="204"/>
    </location>
</feature>
<feature type="domain" description="Helicase C-terminal" evidence="4">
    <location>
        <begin position="367"/>
        <end position="532"/>
    </location>
</feature>
<feature type="region of interest" description="Binding to the cap-specific mRNA (nucleoside-2'-O-)-methyltransferase" evidence="1">
    <location>
        <begin position="457"/>
        <end position="524"/>
    </location>
</feature>
<feature type="short sequence motif" description="DEXH box">
    <location>
        <begin position="141"/>
        <end position="144"/>
    </location>
</feature>
<feature type="binding site" evidence="3">
    <location>
        <begin position="55"/>
        <end position="62"/>
    </location>
    <ligand>
        <name>ATP</name>
        <dbReference type="ChEBI" id="CHEBI:30616"/>
    </ligand>
</feature>
<proteinExistence type="evidence at protein level"/>
<organismHost>
    <name type="scientific">Homo sapiens</name>
    <name type="common">Human</name>
    <dbReference type="NCBI Taxonomy" id="9606"/>
</organismHost>
<gene>
    <name type="primary">OPG123</name>
    <name type="synonym">NPH1</name>
    <name type="ORF">D11L</name>
</gene>
<dbReference type="EC" id="3.6.1.15"/>
<dbReference type="EMBL" id="M35027">
    <property type="protein sequence ID" value="AAA48110.1"/>
    <property type="molecule type" value="Genomic_DNA"/>
</dbReference>
<dbReference type="PDB" id="8RQK">
    <property type="method" value="EM"/>
    <property type="resolution" value="2.65 A"/>
    <property type="chains" value="Y=1-631"/>
</dbReference>
<dbReference type="PDBsum" id="8RQK"/>
<dbReference type="EMDB" id="EMD-19442"/>
<dbReference type="SMR" id="P20637"/>
<dbReference type="Proteomes" id="UP000008269">
    <property type="component" value="Segment"/>
</dbReference>
<dbReference type="GO" id="GO:0044423">
    <property type="term" value="C:virion component"/>
    <property type="evidence" value="ECO:0007669"/>
    <property type="project" value="UniProtKB-KW"/>
</dbReference>
<dbReference type="GO" id="GO:0005524">
    <property type="term" value="F:ATP binding"/>
    <property type="evidence" value="ECO:0007669"/>
    <property type="project" value="UniProtKB-KW"/>
</dbReference>
<dbReference type="GO" id="GO:0003677">
    <property type="term" value="F:DNA binding"/>
    <property type="evidence" value="ECO:0007669"/>
    <property type="project" value="UniProtKB-KW"/>
</dbReference>
<dbReference type="GO" id="GO:0017111">
    <property type="term" value="F:ribonucleoside triphosphate phosphatase activity"/>
    <property type="evidence" value="ECO:0007669"/>
    <property type="project" value="UniProtKB-EC"/>
</dbReference>
<dbReference type="GO" id="GO:0006351">
    <property type="term" value="P:DNA-templated transcription"/>
    <property type="evidence" value="ECO:0007669"/>
    <property type="project" value="InterPro"/>
</dbReference>
<dbReference type="CDD" id="cd18785">
    <property type="entry name" value="SF2_C"/>
    <property type="match status" value="1"/>
</dbReference>
<dbReference type="Gene3D" id="3.40.50.300">
    <property type="entry name" value="P-loop containing nucleotide triphosphate hydrolases"/>
    <property type="match status" value="2"/>
</dbReference>
<dbReference type="InterPro" id="IPR014001">
    <property type="entry name" value="Helicase_ATP-bd"/>
</dbReference>
<dbReference type="InterPro" id="IPR001650">
    <property type="entry name" value="Helicase_C-like"/>
</dbReference>
<dbReference type="InterPro" id="IPR013676">
    <property type="entry name" value="NPHI_C"/>
</dbReference>
<dbReference type="InterPro" id="IPR027417">
    <property type="entry name" value="P-loop_NTPase"/>
</dbReference>
<dbReference type="InterPro" id="IPR000330">
    <property type="entry name" value="SNF2_N"/>
</dbReference>
<dbReference type="PANTHER" id="PTHR10799">
    <property type="entry name" value="SNF2/RAD54 HELICASE FAMILY"/>
    <property type="match status" value="1"/>
</dbReference>
<dbReference type="Pfam" id="PF00271">
    <property type="entry name" value="Helicase_C"/>
    <property type="match status" value="1"/>
</dbReference>
<dbReference type="Pfam" id="PF08469">
    <property type="entry name" value="NPHI_C"/>
    <property type="match status" value="1"/>
</dbReference>
<dbReference type="Pfam" id="PF00176">
    <property type="entry name" value="SNF2-rel_dom"/>
    <property type="match status" value="1"/>
</dbReference>
<dbReference type="SMART" id="SM00487">
    <property type="entry name" value="DEXDc"/>
    <property type="match status" value="1"/>
</dbReference>
<dbReference type="SMART" id="SM00490">
    <property type="entry name" value="HELICc"/>
    <property type="match status" value="1"/>
</dbReference>
<dbReference type="SUPFAM" id="SSF52540">
    <property type="entry name" value="P-loop containing nucleoside triphosphate hydrolases"/>
    <property type="match status" value="2"/>
</dbReference>
<dbReference type="PROSITE" id="PS51192">
    <property type="entry name" value="HELICASE_ATP_BIND_1"/>
    <property type="match status" value="1"/>
</dbReference>
<dbReference type="PROSITE" id="PS51194">
    <property type="entry name" value="HELICASE_CTER"/>
    <property type="match status" value="1"/>
</dbReference>
<keyword id="KW-0002">3D-structure</keyword>
<keyword id="KW-0067">ATP-binding</keyword>
<keyword id="KW-0238">DNA-binding</keyword>
<keyword id="KW-0378">Hydrolase</keyword>
<keyword id="KW-0426">Late protein</keyword>
<keyword id="KW-0547">Nucleotide-binding</keyword>
<keyword id="KW-1185">Reference proteome</keyword>
<keyword id="KW-0804">Transcription</keyword>
<keyword id="KW-0946">Virion</keyword>
<name>NTP1_VACCC</name>
<comment type="function">
    <text evidence="2">DNA-dependent ATPase that acts as a 5' to 3' translocase on single-stranded DNA and thereby plays a role in transcription termination of viral early genes. Uses forward translocation in concert with the viral RNA polymerase RAP94/OPG109 subunit and the capping enzyme/VTF to catalyze release of UUUUUNU-containing nascent RNA from the elongation complex. In addition, acts as a positive elongation factor to assist transcription through problematic sequences.</text>
</comment>
<comment type="catalytic activity">
    <reaction evidence="2">
        <text>a ribonucleoside 5'-triphosphate + H2O = a ribonucleoside 5'-diphosphate + phosphate + H(+)</text>
        <dbReference type="Rhea" id="RHEA:23680"/>
        <dbReference type="ChEBI" id="CHEBI:15377"/>
        <dbReference type="ChEBI" id="CHEBI:15378"/>
        <dbReference type="ChEBI" id="CHEBI:43474"/>
        <dbReference type="ChEBI" id="CHEBI:57930"/>
        <dbReference type="ChEBI" id="CHEBI:61557"/>
        <dbReference type="EC" id="3.6.1.15"/>
    </reaction>
</comment>
<comment type="subunit">
    <text evidence="2">Monomer. Interacts (via C-terminus) with RAP94/OPG109 (via N-terminus). Interacts with the cap-specific mRNA (nucleoside-2'-O-)-methyltransferase OPG102.</text>
</comment>
<comment type="subcellular location">
    <subcellularLocation>
        <location evidence="2">Virion</location>
    </subcellularLocation>
    <text evidence="2">Virion core enzyme.</text>
</comment>
<comment type="similarity">
    <text evidence="5">Belongs to the helicase family. NPH I subfamily.</text>
</comment>